<gene>
    <name type="ordered locus">TP_0438</name>
</gene>
<sequence length="269" mass="30009">MRAVDFLRRATVCWYMRIYLASNNAHKHAEFSSLFPMHTILLPKDEGIDFFSPEDGSTFFANARQKADALYDVVHAPVLADDSGLCVDALDGDPGVHSARFGAQHGVHTDTARMQLLLERMHGRQDRACSFVCVAVLKLGSVPLCVGRGVCRGVLTTEMSGVEGFGYDPIFLLPHLGRTFAQLSIEEKNRVSHRALAALRLAQVLAMMQLPRALRYELKLLRGARRMTRGGVLRPGAPCAQRKGQTAQTARRHKFYARARRCARRIHRA</sequence>
<proteinExistence type="inferred from homology"/>
<evidence type="ECO:0000255" key="1">
    <source>
        <dbReference type="HAMAP-Rule" id="MF_01405"/>
    </source>
</evidence>
<name>IXTPA_TREPA</name>
<feature type="chain" id="PRO_0000178257" description="dITP/XTP pyrophosphatase">
    <location>
        <begin position="1"/>
        <end position="269"/>
    </location>
</feature>
<feature type="active site" description="Proton acceptor" evidence="1">
    <location>
        <position position="82"/>
    </location>
</feature>
<feature type="binding site" evidence="1">
    <location>
        <begin position="22"/>
        <end position="27"/>
    </location>
    <ligand>
        <name>substrate</name>
    </ligand>
</feature>
<feature type="binding site" evidence="1">
    <location>
        <position position="82"/>
    </location>
    <ligand>
        <name>Mg(2+)</name>
        <dbReference type="ChEBI" id="CHEBI:18420"/>
    </ligand>
</feature>
<feature type="binding site" evidence="1">
    <location>
        <position position="83"/>
    </location>
    <ligand>
        <name>substrate</name>
    </ligand>
</feature>
<feature type="binding site" evidence="1">
    <location>
        <begin position="165"/>
        <end position="168"/>
    </location>
    <ligand>
        <name>substrate</name>
    </ligand>
</feature>
<feature type="binding site" evidence="1">
    <location>
        <position position="188"/>
    </location>
    <ligand>
        <name>substrate</name>
    </ligand>
</feature>
<feature type="binding site" evidence="1">
    <location>
        <begin position="193"/>
        <end position="194"/>
    </location>
    <ligand>
        <name>substrate</name>
    </ligand>
</feature>
<comment type="function">
    <text evidence="1">Pyrophosphatase that catalyzes the hydrolysis of nucleoside triphosphates to their monophosphate derivatives, with a high preference for the non-canonical purine nucleotides XTP (xanthosine triphosphate), dITP (deoxyinosine triphosphate) and ITP. Seems to function as a house-cleaning enzyme that removes non-canonical purine nucleotides from the nucleotide pool, thus preventing their incorporation into DNA/RNA and avoiding chromosomal lesions.</text>
</comment>
<comment type="catalytic activity">
    <reaction evidence="1">
        <text>XTP + H2O = XMP + diphosphate + H(+)</text>
        <dbReference type="Rhea" id="RHEA:28610"/>
        <dbReference type="ChEBI" id="CHEBI:15377"/>
        <dbReference type="ChEBI" id="CHEBI:15378"/>
        <dbReference type="ChEBI" id="CHEBI:33019"/>
        <dbReference type="ChEBI" id="CHEBI:57464"/>
        <dbReference type="ChEBI" id="CHEBI:61314"/>
        <dbReference type="EC" id="3.6.1.66"/>
    </reaction>
</comment>
<comment type="catalytic activity">
    <reaction evidence="1">
        <text>dITP + H2O = dIMP + diphosphate + H(+)</text>
        <dbReference type="Rhea" id="RHEA:28342"/>
        <dbReference type="ChEBI" id="CHEBI:15377"/>
        <dbReference type="ChEBI" id="CHEBI:15378"/>
        <dbReference type="ChEBI" id="CHEBI:33019"/>
        <dbReference type="ChEBI" id="CHEBI:61194"/>
        <dbReference type="ChEBI" id="CHEBI:61382"/>
        <dbReference type="EC" id="3.6.1.66"/>
    </reaction>
</comment>
<comment type="catalytic activity">
    <reaction evidence="1">
        <text>ITP + H2O = IMP + diphosphate + H(+)</text>
        <dbReference type="Rhea" id="RHEA:29399"/>
        <dbReference type="ChEBI" id="CHEBI:15377"/>
        <dbReference type="ChEBI" id="CHEBI:15378"/>
        <dbReference type="ChEBI" id="CHEBI:33019"/>
        <dbReference type="ChEBI" id="CHEBI:58053"/>
        <dbReference type="ChEBI" id="CHEBI:61402"/>
        <dbReference type="EC" id="3.6.1.66"/>
    </reaction>
</comment>
<comment type="cofactor">
    <cofactor evidence="1">
        <name>Mg(2+)</name>
        <dbReference type="ChEBI" id="CHEBI:18420"/>
    </cofactor>
    <text evidence="1">Binds 1 Mg(2+) ion per subunit.</text>
</comment>
<comment type="subunit">
    <text evidence="1">Homodimer.</text>
</comment>
<comment type="similarity">
    <text evidence="1">Belongs to the HAM1 NTPase family.</text>
</comment>
<reference key="1">
    <citation type="journal article" date="1998" name="Science">
        <title>Complete genome sequence of Treponema pallidum, the syphilis spirochete.</title>
        <authorList>
            <person name="Fraser C.M."/>
            <person name="Norris S.J."/>
            <person name="Weinstock G.M."/>
            <person name="White O."/>
            <person name="Sutton G.G."/>
            <person name="Dodson R.J."/>
            <person name="Gwinn M.L."/>
            <person name="Hickey E.K."/>
            <person name="Clayton R.A."/>
            <person name="Ketchum K.A."/>
            <person name="Sodergren E."/>
            <person name="Hardham J.M."/>
            <person name="McLeod M.P."/>
            <person name="Salzberg S.L."/>
            <person name="Peterson J.D."/>
            <person name="Khalak H.G."/>
            <person name="Richardson D.L."/>
            <person name="Howell J.K."/>
            <person name="Chidambaram M."/>
            <person name="Utterback T.R."/>
            <person name="McDonald L.A."/>
            <person name="Artiach P."/>
            <person name="Bowman C."/>
            <person name="Cotton M.D."/>
            <person name="Fujii C."/>
            <person name="Garland S.A."/>
            <person name="Hatch B."/>
            <person name="Horst K."/>
            <person name="Roberts K.M."/>
            <person name="Sandusky M."/>
            <person name="Weidman J.F."/>
            <person name="Smith H.O."/>
            <person name="Venter J.C."/>
        </authorList>
    </citation>
    <scope>NUCLEOTIDE SEQUENCE [LARGE SCALE GENOMIC DNA]</scope>
    <source>
        <strain>Nichols</strain>
    </source>
</reference>
<keyword id="KW-0378">Hydrolase</keyword>
<keyword id="KW-0460">Magnesium</keyword>
<keyword id="KW-0479">Metal-binding</keyword>
<keyword id="KW-0546">Nucleotide metabolism</keyword>
<keyword id="KW-0547">Nucleotide-binding</keyword>
<keyword id="KW-1185">Reference proteome</keyword>
<protein>
    <recommendedName>
        <fullName evidence="1">dITP/XTP pyrophosphatase</fullName>
        <ecNumber evidence="1">3.6.1.66</ecNumber>
    </recommendedName>
    <alternativeName>
        <fullName evidence="1">Non-canonical purine NTP pyrophosphatase</fullName>
    </alternativeName>
    <alternativeName>
        <fullName evidence="1">Non-standard purine NTP pyrophosphatase</fullName>
    </alternativeName>
    <alternativeName>
        <fullName evidence="1">Nucleoside-triphosphate diphosphatase</fullName>
    </alternativeName>
    <alternativeName>
        <fullName evidence="1">Nucleoside-triphosphate pyrophosphatase</fullName>
        <shortName evidence="1">NTPase</shortName>
    </alternativeName>
</protein>
<dbReference type="EC" id="3.6.1.66" evidence="1"/>
<dbReference type="EMBL" id="AE000520">
    <property type="protein sequence ID" value="AAC65425.1"/>
    <property type="molecule type" value="Genomic_DNA"/>
</dbReference>
<dbReference type="PIR" id="F71323">
    <property type="entry name" value="F71323"/>
</dbReference>
<dbReference type="SMR" id="O83452"/>
<dbReference type="STRING" id="243276.TP_0438"/>
<dbReference type="EnsemblBacteria" id="AAC65425">
    <property type="protein sequence ID" value="AAC65425"/>
    <property type="gene ID" value="TP_0438"/>
</dbReference>
<dbReference type="KEGG" id="tpa:TP_0438"/>
<dbReference type="KEGG" id="tpw:TPANIC_0438"/>
<dbReference type="eggNOG" id="COG0127">
    <property type="taxonomic scope" value="Bacteria"/>
</dbReference>
<dbReference type="HOGENOM" id="CLU_082080_0_2_12"/>
<dbReference type="OrthoDB" id="9807456at2"/>
<dbReference type="Proteomes" id="UP000000811">
    <property type="component" value="Chromosome"/>
</dbReference>
<dbReference type="GO" id="GO:0005829">
    <property type="term" value="C:cytosol"/>
    <property type="evidence" value="ECO:0007669"/>
    <property type="project" value="TreeGrafter"/>
</dbReference>
<dbReference type="GO" id="GO:0035870">
    <property type="term" value="F:dITP diphosphatase activity"/>
    <property type="evidence" value="ECO:0007669"/>
    <property type="project" value="RHEA"/>
</dbReference>
<dbReference type="GO" id="GO:0036220">
    <property type="term" value="F:ITP diphosphatase activity"/>
    <property type="evidence" value="ECO:0007669"/>
    <property type="project" value="UniProtKB-EC"/>
</dbReference>
<dbReference type="GO" id="GO:0046872">
    <property type="term" value="F:metal ion binding"/>
    <property type="evidence" value="ECO:0007669"/>
    <property type="project" value="UniProtKB-KW"/>
</dbReference>
<dbReference type="GO" id="GO:0000166">
    <property type="term" value="F:nucleotide binding"/>
    <property type="evidence" value="ECO:0007669"/>
    <property type="project" value="UniProtKB-KW"/>
</dbReference>
<dbReference type="GO" id="GO:0017111">
    <property type="term" value="F:ribonucleoside triphosphate phosphatase activity"/>
    <property type="evidence" value="ECO:0007669"/>
    <property type="project" value="InterPro"/>
</dbReference>
<dbReference type="GO" id="GO:0036222">
    <property type="term" value="F:XTP diphosphatase activity"/>
    <property type="evidence" value="ECO:0007669"/>
    <property type="project" value="RHEA"/>
</dbReference>
<dbReference type="GO" id="GO:0009117">
    <property type="term" value="P:nucleotide metabolic process"/>
    <property type="evidence" value="ECO:0007669"/>
    <property type="project" value="UniProtKB-KW"/>
</dbReference>
<dbReference type="GO" id="GO:0009146">
    <property type="term" value="P:purine nucleoside triphosphate catabolic process"/>
    <property type="evidence" value="ECO:0007669"/>
    <property type="project" value="UniProtKB-UniRule"/>
</dbReference>
<dbReference type="CDD" id="cd00515">
    <property type="entry name" value="HAM1"/>
    <property type="match status" value="1"/>
</dbReference>
<dbReference type="FunFam" id="3.90.950.10:FF:000001">
    <property type="entry name" value="dITP/XTP pyrophosphatase"/>
    <property type="match status" value="1"/>
</dbReference>
<dbReference type="Gene3D" id="3.90.950.10">
    <property type="match status" value="1"/>
</dbReference>
<dbReference type="HAMAP" id="MF_01405">
    <property type="entry name" value="Non_canon_purine_NTPase"/>
    <property type="match status" value="1"/>
</dbReference>
<dbReference type="InterPro" id="IPR020922">
    <property type="entry name" value="dITP/XTP_pyrophosphatase"/>
</dbReference>
<dbReference type="InterPro" id="IPR029001">
    <property type="entry name" value="ITPase-like_fam"/>
</dbReference>
<dbReference type="InterPro" id="IPR002637">
    <property type="entry name" value="RdgB/HAM1"/>
</dbReference>
<dbReference type="PANTHER" id="PTHR11067:SF9">
    <property type="entry name" value="INOSINE TRIPHOSPHATE PYROPHOSPHATASE"/>
    <property type="match status" value="1"/>
</dbReference>
<dbReference type="PANTHER" id="PTHR11067">
    <property type="entry name" value="INOSINE TRIPHOSPHATE PYROPHOSPHATASE/HAM1 PROTEIN"/>
    <property type="match status" value="1"/>
</dbReference>
<dbReference type="Pfam" id="PF01725">
    <property type="entry name" value="Ham1p_like"/>
    <property type="match status" value="1"/>
</dbReference>
<dbReference type="SUPFAM" id="SSF52972">
    <property type="entry name" value="ITPase-like"/>
    <property type="match status" value="1"/>
</dbReference>
<organism>
    <name type="scientific">Treponema pallidum (strain Nichols)</name>
    <dbReference type="NCBI Taxonomy" id="243276"/>
    <lineage>
        <taxon>Bacteria</taxon>
        <taxon>Pseudomonadati</taxon>
        <taxon>Spirochaetota</taxon>
        <taxon>Spirochaetia</taxon>
        <taxon>Spirochaetales</taxon>
        <taxon>Treponemataceae</taxon>
        <taxon>Treponema</taxon>
    </lineage>
</organism>
<accession>O83452</accession>